<sequence>MSSKATKTVKSKFDIINNQLRDDLIDFRSGDTIRVDVKIKEGYKFRIQSFEGLVIKTQGSGITYSVVVRKMSNGVFVERTFPLHSPIIDSVTLIKRGKVRRSRIYYIRKLSGKAARIKEIMPTKQAKEIK</sequence>
<keyword id="KW-1185">Reference proteome</keyword>
<keyword id="KW-0687">Ribonucleoprotein</keyword>
<keyword id="KW-0689">Ribosomal protein</keyword>
<protein>
    <recommendedName>
        <fullName evidence="1">Large ribosomal subunit protein bL19</fullName>
    </recommendedName>
    <alternativeName>
        <fullName evidence="2">50S ribosomal protein L19</fullName>
    </alternativeName>
</protein>
<name>RL19_MYCMS</name>
<organism>
    <name type="scientific">Mycoplasma mycoides subsp. mycoides SC (strain CCUG 32753 / NCTC 10114 / PG1)</name>
    <dbReference type="NCBI Taxonomy" id="272632"/>
    <lineage>
        <taxon>Bacteria</taxon>
        <taxon>Bacillati</taxon>
        <taxon>Mycoplasmatota</taxon>
        <taxon>Mollicutes</taxon>
        <taxon>Mycoplasmataceae</taxon>
        <taxon>Mycoplasma</taxon>
    </lineage>
</organism>
<comment type="function">
    <text evidence="1">This protein is located at the 30S-50S ribosomal subunit interface and may play a role in the structure and function of the aminoacyl-tRNA binding site.</text>
</comment>
<comment type="similarity">
    <text evidence="1">Belongs to the bacterial ribosomal protein bL19 family.</text>
</comment>
<gene>
    <name evidence="1" type="primary">rplS</name>
    <name type="ordered locus">MSC_0428</name>
</gene>
<reference key="1">
    <citation type="journal article" date="2004" name="Genome Res.">
        <title>The genome sequence of Mycoplasma mycoides subsp. mycoides SC type strain PG1T, the causative agent of contagious bovine pleuropneumonia (CBPP).</title>
        <authorList>
            <person name="Westberg J."/>
            <person name="Persson A."/>
            <person name="Holmberg A."/>
            <person name="Goesmann A."/>
            <person name="Lundeberg J."/>
            <person name="Johansson K.-E."/>
            <person name="Pettersson B."/>
            <person name="Uhlen M."/>
        </authorList>
    </citation>
    <scope>NUCLEOTIDE SEQUENCE [LARGE SCALE GENOMIC DNA]</scope>
    <source>
        <strain>CCUG 32753 / NCTC 10114 / PG1</strain>
    </source>
</reference>
<feature type="chain" id="PRO_0000163489" description="Large ribosomal subunit protein bL19">
    <location>
        <begin position="1"/>
        <end position="130"/>
    </location>
</feature>
<accession>Q6MTI0</accession>
<evidence type="ECO:0000255" key="1">
    <source>
        <dbReference type="HAMAP-Rule" id="MF_00402"/>
    </source>
</evidence>
<evidence type="ECO:0000305" key="2"/>
<proteinExistence type="inferred from homology"/>
<dbReference type="EMBL" id="BX293980">
    <property type="protein sequence ID" value="CAE77056.1"/>
    <property type="molecule type" value="Genomic_DNA"/>
</dbReference>
<dbReference type="RefSeq" id="NP_975414.1">
    <property type="nucleotide sequence ID" value="NC_005364.2"/>
</dbReference>
<dbReference type="RefSeq" id="WP_011166612.1">
    <property type="nucleotide sequence ID" value="NC_005364.2"/>
</dbReference>
<dbReference type="SMR" id="Q6MTI0"/>
<dbReference type="STRING" id="272632.MSC_0428"/>
<dbReference type="KEGG" id="mmy:MSC_0428"/>
<dbReference type="PATRIC" id="fig|272632.4.peg.466"/>
<dbReference type="eggNOG" id="COG0335">
    <property type="taxonomic scope" value="Bacteria"/>
</dbReference>
<dbReference type="HOGENOM" id="CLU_103507_2_1_14"/>
<dbReference type="Proteomes" id="UP000001016">
    <property type="component" value="Chromosome"/>
</dbReference>
<dbReference type="GO" id="GO:0022625">
    <property type="term" value="C:cytosolic large ribosomal subunit"/>
    <property type="evidence" value="ECO:0007669"/>
    <property type="project" value="TreeGrafter"/>
</dbReference>
<dbReference type="GO" id="GO:0003735">
    <property type="term" value="F:structural constituent of ribosome"/>
    <property type="evidence" value="ECO:0007669"/>
    <property type="project" value="InterPro"/>
</dbReference>
<dbReference type="GO" id="GO:0006412">
    <property type="term" value="P:translation"/>
    <property type="evidence" value="ECO:0007669"/>
    <property type="project" value="UniProtKB-UniRule"/>
</dbReference>
<dbReference type="Gene3D" id="2.30.30.790">
    <property type="match status" value="1"/>
</dbReference>
<dbReference type="HAMAP" id="MF_00402">
    <property type="entry name" value="Ribosomal_bL19"/>
    <property type="match status" value="1"/>
</dbReference>
<dbReference type="InterPro" id="IPR001857">
    <property type="entry name" value="Ribosomal_bL19"/>
</dbReference>
<dbReference type="InterPro" id="IPR018257">
    <property type="entry name" value="Ribosomal_bL19_CS"/>
</dbReference>
<dbReference type="InterPro" id="IPR038657">
    <property type="entry name" value="Ribosomal_bL19_sf"/>
</dbReference>
<dbReference type="InterPro" id="IPR008991">
    <property type="entry name" value="Translation_prot_SH3-like_sf"/>
</dbReference>
<dbReference type="NCBIfam" id="TIGR01024">
    <property type="entry name" value="rplS_bact"/>
    <property type="match status" value="1"/>
</dbReference>
<dbReference type="PANTHER" id="PTHR15680:SF9">
    <property type="entry name" value="LARGE RIBOSOMAL SUBUNIT PROTEIN BL19M"/>
    <property type="match status" value="1"/>
</dbReference>
<dbReference type="PANTHER" id="PTHR15680">
    <property type="entry name" value="RIBOSOMAL PROTEIN L19"/>
    <property type="match status" value="1"/>
</dbReference>
<dbReference type="Pfam" id="PF01245">
    <property type="entry name" value="Ribosomal_L19"/>
    <property type="match status" value="1"/>
</dbReference>
<dbReference type="PIRSF" id="PIRSF002191">
    <property type="entry name" value="Ribosomal_L19"/>
    <property type="match status" value="1"/>
</dbReference>
<dbReference type="PRINTS" id="PR00061">
    <property type="entry name" value="RIBOSOMALL19"/>
</dbReference>
<dbReference type="SUPFAM" id="SSF50104">
    <property type="entry name" value="Translation proteins SH3-like domain"/>
    <property type="match status" value="1"/>
</dbReference>
<dbReference type="PROSITE" id="PS01015">
    <property type="entry name" value="RIBOSOMAL_L19"/>
    <property type="match status" value="1"/>
</dbReference>